<evidence type="ECO:0000269" key="1">
    <source>
    </source>
</evidence>
<evidence type="ECO:0000269" key="2">
    <source>
    </source>
</evidence>
<evidence type="ECO:0000269" key="3">
    <source>
    </source>
</evidence>
<evidence type="ECO:0000269" key="4">
    <source>
    </source>
</evidence>
<evidence type="ECO:0000269" key="5">
    <source>
    </source>
</evidence>
<evidence type="ECO:0000269" key="6">
    <source>
    </source>
</evidence>
<evidence type="ECO:0000303" key="7">
    <source>
    </source>
</evidence>
<evidence type="ECO:0000305" key="8"/>
<name>ECT1_YEAST</name>
<protein>
    <recommendedName>
        <fullName evidence="7">Ethanolamine-phosphate cytidylyltransferase</fullName>
        <ecNumber evidence="6">2.7.7.14</ecNumber>
    </recommendedName>
    <alternativeName>
        <fullName evidence="7">CTP:phosphoethanolamine cytidylyltransferase</fullName>
    </alternativeName>
    <alternativeName>
        <fullName evidence="7">Phosphorylethanolamine transferase</fullName>
    </alternativeName>
</protein>
<reference key="1">
    <citation type="journal article" date="1993" name="Mol. Cell. Biol.">
        <title>A U5 small nuclear ribonucleoprotein particle protein involved only in the second step of pre-mRNA splicing in Saccharomyces cerevisiae.</title>
        <authorList>
            <person name="Horowitz D.S."/>
            <person name="Abelson J.N."/>
        </authorList>
    </citation>
    <scope>NUCLEOTIDE SEQUENCE [GENOMIC DNA]</scope>
</reference>
<reference key="2">
    <citation type="journal article" date="1996" name="J. Biochem.">
        <title>Isolation and characterization of ECT1 gene encoding CTP: phosphoethanolamine cytidylyltransferase of Saccharomyces cerevisiae.</title>
        <authorList>
            <person name="Min-Seok R."/>
            <person name="Kawamata Y."/>
            <person name="Nakamura H."/>
            <person name="Ohta A."/>
            <person name="Takagi M."/>
        </authorList>
    </citation>
    <scope>NUCLEOTIDE SEQUENCE [GENOMIC DNA]</scope>
    <scope>FUNCTION</scope>
    <scope>CATALYTIC ACTIVITY</scope>
    <source>
        <strain>S288c / GRF88</strain>
    </source>
</reference>
<reference key="3">
    <citation type="journal article" date="1997" name="Nature">
        <title>The nucleotide sequence of Saccharomyces cerevisiae chromosome VII.</title>
        <authorList>
            <person name="Tettelin H."/>
            <person name="Agostoni-Carbone M.L."/>
            <person name="Albermann K."/>
            <person name="Albers M."/>
            <person name="Arroyo J."/>
            <person name="Backes U."/>
            <person name="Barreiros T."/>
            <person name="Bertani I."/>
            <person name="Bjourson A.J."/>
            <person name="Brueckner M."/>
            <person name="Bruschi C.V."/>
            <person name="Carignani G."/>
            <person name="Castagnoli L."/>
            <person name="Cerdan E."/>
            <person name="Clemente M.L."/>
            <person name="Coblenz A."/>
            <person name="Coglievina M."/>
            <person name="Coissac E."/>
            <person name="Defoor E."/>
            <person name="Del Bino S."/>
            <person name="Delius H."/>
            <person name="Delneri D."/>
            <person name="de Wergifosse P."/>
            <person name="Dujon B."/>
            <person name="Durand P."/>
            <person name="Entian K.-D."/>
            <person name="Eraso P."/>
            <person name="Escribano V."/>
            <person name="Fabiani L."/>
            <person name="Fartmann B."/>
            <person name="Feroli F."/>
            <person name="Feuermann M."/>
            <person name="Frontali L."/>
            <person name="Garcia-Gonzalez M."/>
            <person name="Garcia-Saez M.I."/>
            <person name="Goffeau A."/>
            <person name="Guerreiro P."/>
            <person name="Hani J."/>
            <person name="Hansen M."/>
            <person name="Hebling U."/>
            <person name="Hernandez K."/>
            <person name="Heumann K."/>
            <person name="Hilger F."/>
            <person name="Hofmann B."/>
            <person name="Indge K.J."/>
            <person name="James C.M."/>
            <person name="Klima R."/>
            <person name="Koetter P."/>
            <person name="Kramer B."/>
            <person name="Kramer W."/>
            <person name="Lauquin G."/>
            <person name="Leuther H."/>
            <person name="Louis E.J."/>
            <person name="Maillier E."/>
            <person name="Marconi A."/>
            <person name="Martegani E."/>
            <person name="Mazon M.J."/>
            <person name="Mazzoni C."/>
            <person name="McReynolds A.D.K."/>
            <person name="Melchioretto P."/>
            <person name="Mewes H.-W."/>
            <person name="Minenkova O."/>
            <person name="Mueller-Auer S."/>
            <person name="Nawrocki A."/>
            <person name="Netter P."/>
            <person name="Neu R."/>
            <person name="Nombela C."/>
            <person name="Oliver S.G."/>
            <person name="Panzeri L."/>
            <person name="Paoluzi S."/>
            <person name="Plevani P."/>
            <person name="Portetelle D."/>
            <person name="Portillo F."/>
            <person name="Potier S."/>
            <person name="Purnelle B."/>
            <person name="Rieger M."/>
            <person name="Riles L."/>
            <person name="Rinaldi T."/>
            <person name="Robben J."/>
            <person name="Rodrigues-Pousada C."/>
            <person name="Rodriguez-Belmonte E."/>
            <person name="Rodriguez-Torres A.M."/>
            <person name="Rose M."/>
            <person name="Ruzzi M."/>
            <person name="Saliola M."/>
            <person name="Sanchez-Perez M."/>
            <person name="Schaefer B."/>
            <person name="Schaefer M."/>
            <person name="Scharfe M."/>
            <person name="Schmidheini T."/>
            <person name="Schreer A."/>
            <person name="Skala J."/>
            <person name="Souciet J.-L."/>
            <person name="Steensma H.Y."/>
            <person name="Talla E."/>
            <person name="Thierry A."/>
            <person name="Vandenbol M."/>
            <person name="van der Aart Q.J.M."/>
            <person name="Van Dyck L."/>
            <person name="Vanoni M."/>
            <person name="Verhasselt P."/>
            <person name="Voet M."/>
            <person name="Volckaert G."/>
            <person name="Wambutt R."/>
            <person name="Watson M.D."/>
            <person name="Weber N."/>
            <person name="Wedler E."/>
            <person name="Wedler H."/>
            <person name="Wipfli P."/>
            <person name="Wolf K."/>
            <person name="Wright L.F."/>
            <person name="Zaccaria P."/>
            <person name="Zimmermann M."/>
            <person name="Zollner A."/>
            <person name="Kleine K."/>
        </authorList>
    </citation>
    <scope>NUCLEOTIDE SEQUENCE [LARGE SCALE GENOMIC DNA]</scope>
    <source>
        <strain>ATCC 204508 / S288c</strain>
    </source>
</reference>
<reference key="4">
    <citation type="journal article" date="2014" name="G3 (Bethesda)">
        <title>The reference genome sequence of Saccharomyces cerevisiae: Then and now.</title>
        <authorList>
            <person name="Engel S.R."/>
            <person name="Dietrich F.S."/>
            <person name="Fisk D.G."/>
            <person name="Binkley G."/>
            <person name="Balakrishnan R."/>
            <person name="Costanzo M.C."/>
            <person name="Dwight S.S."/>
            <person name="Hitz B.C."/>
            <person name="Karra K."/>
            <person name="Nash R.S."/>
            <person name="Weng S."/>
            <person name="Wong E.D."/>
            <person name="Lloyd P."/>
            <person name="Skrzypek M.S."/>
            <person name="Miyasato S.R."/>
            <person name="Simison M."/>
            <person name="Cherry J.M."/>
        </authorList>
    </citation>
    <scope>GENOME REANNOTATION</scope>
    <source>
        <strain>ATCC 204508 / S288c</strain>
    </source>
</reference>
<reference key="5">
    <citation type="journal article" date="2007" name="Genome Res.">
        <title>Approaching a complete repository of sequence-verified protein-encoding clones for Saccharomyces cerevisiae.</title>
        <authorList>
            <person name="Hu Y."/>
            <person name="Rolfs A."/>
            <person name="Bhullar B."/>
            <person name="Murthy T.V.S."/>
            <person name="Zhu C."/>
            <person name="Berger M.F."/>
            <person name="Camargo A.A."/>
            <person name="Kelley F."/>
            <person name="McCarron S."/>
            <person name="Jepson D."/>
            <person name="Richardson A."/>
            <person name="Raphael J."/>
            <person name="Moreira D."/>
            <person name="Taycher E."/>
            <person name="Zuo D."/>
            <person name="Mohr S."/>
            <person name="Kane M.F."/>
            <person name="Williamson J."/>
            <person name="Simpson A.J.G."/>
            <person name="Bulyk M.L."/>
            <person name="Harlow E."/>
            <person name="Marsischky G."/>
            <person name="Kolodner R.D."/>
            <person name="LaBaer J."/>
        </authorList>
    </citation>
    <scope>NUCLEOTIDE SEQUENCE [GENOMIC DNA]</scope>
    <source>
        <strain>ATCC 204508 / S288c</strain>
    </source>
</reference>
<reference key="6">
    <citation type="journal article" date="2000" name="Appl. Environ. Microbiol.">
        <title>Screening of genes involved in isooctane tolerance in Saccharomyces cerevisiae by using mRNA differential display.</title>
        <authorList>
            <person name="Miura S."/>
            <person name="Zou W."/>
            <person name="Ueda M."/>
            <person name="Tanaka A."/>
        </authorList>
    </citation>
    <scope>INDUCTION</scope>
</reference>
<reference key="7">
    <citation type="journal article" date="2003" name="Nature">
        <title>Global analysis of protein localization in budding yeast.</title>
        <authorList>
            <person name="Huh W.-K."/>
            <person name="Falvo J.V."/>
            <person name="Gerke L.C."/>
            <person name="Carroll A.S."/>
            <person name="Howson R.W."/>
            <person name="Weissman J.S."/>
            <person name="O'Shea E.K."/>
        </authorList>
    </citation>
    <scope>SUBCELLULAR LOCATION [LARGE SCALE ANALYSIS]</scope>
</reference>
<reference key="8">
    <citation type="journal article" date="2003" name="Nature">
        <title>Global analysis of protein expression in yeast.</title>
        <authorList>
            <person name="Ghaemmaghami S."/>
            <person name="Huh W.-K."/>
            <person name="Bower K."/>
            <person name="Howson R.W."/>
            <person name="Belle A."/>
            <person name="Dephoure N."/>
            <person name="O'Shea E.K."/>
            <person name="Weissman J.S."/>
        </authorList>
    </citation>
    <scope>LEVEL OF PROTEIN EXPRESSION [LARGE SCALE ANALYSIS]</scope>
</reference>
<reference key="9">
    <citation type="journal article" date="2007" name="J. Biol. Chem.">
        <title>Respiratory deficiency mediates the regulation of CHO1-encoded phosphatidylserine synthase by mRNA stability in Saccharomyces cerevisiae.</title>
        <authorList>
            <person name="Choi H.-S."/>
            <person name="Carman G.M."/>
        </authorList>
    </citation>
    <scope>FUNCTION</scope>
</reference>
<reference key="10">
    <citation type="journal article" date="2008" name="Biosci. Biotechnol. Biochem.">
        <title>Manipulation of major membrane lipid synthesis and its effects on sporulation in Saccharomyces cerevisiae.</title>
        <authorList>
            <person name="Deng L."/>
            <person name="Nagasawa J."/>
            <person name="Ono Y."/>
            <person name="Ishikawa Y."/>
            <person name="Kakihara T."/>
            <person name="Fukuda R."/>
            <person name="Ohta A."/>
        </authorList>
    </citation>
    <scope>FUNCTION</scope>
</reference>
<reference key="11">
    <citation type="journal article" date="2006" name="Acta Crystallogr. F">
        <title>Crystallization and preliminary X-ray analysis of CTP:phosphoethanolamine cytidylyltransferase (ECT) from Saccharomyces cerevisiae.</title>
        <authorList>
            <person name="Ohtsuka J."/>
            <person name="Nagata K."/>
            <person name="Lee W.C."/>
            <person name="Ono Y."/>
            <person name="Fukuda R."/>
            <person name="Ohta A."/>
            <person name="Tanokura M."/>
        </authorList>
    </citation>
    <scope>CRYSTALLIZATION</scope>
</reference>
<feature type="chain" id="PRO_0000208465" description="Ethanolamine-phosphate cytidylyltransferase">
    <location>
        <begin position="1"/>
        <end position="323"/>
    </location>
</feature>
<feature type="sequence conflict" description="In Ref. 2; BAA09310." evidence="8" ref="2">
    <original>S</original>
    <variation>I</variation>
    <location>
        <position position="252"/>
    </location>
</feature>
<sequence length="323" mass="36863">MTVNLDPDKVWIDGCFDFTHHGHAGAILQARRTVSKENGKLFCGVHTDEDIQHNKGTPVMNSSERYEHTRSNRWCSEVVEAAPYVTDPNWMDKYQCQYVVHGDDITIDANGEDCYKLVKEMGRFKVVKRTYGVSTTEIIHRILTKKSLPPTHPDYYPTTQELSFYSVAQDAVSKHCYVFQRDLDNVLVNGGYKFDAEDCVYVDGDFDLFHMGDIDQLRKLKMDLHPDKKLIVGITTSDYSSTIMTMKERVLSVLSCKYVDAVIIDADATSMSQYNCEKYHIGTAVLTAAGKFSEYLTKELIVKRVESQREVYIARNQKKGMSI</sequence>
<gene>
    <name evidence="7" type="primary">ECT1</name>
    <name type="synonym">MUQ1</name>
    <name type="ordered locus">YGR007W</name>
    <name type="ORF">G3856</name>
</gene>
<dbReference type="EC" id="2.7.7.14" evidence="6"/>
<dbReference type="EMBL" id="L03536">
    <property type="protein sequence ID" value="AAA34916.1"/>
    <property type="molecule type" value="Genomic_DNA"/>
</dbReference>
<dbReference type="EMBL" id="D50644">
    <property type="protein sequence ID" value="BAA09310.1"/>
    <property type="molecule type" value="Genomic_DNA"/>
</dbReference>
<dbReference type="EMBL" id="Z72792">
    <property type="protein sequence ID" value="CAA96990.1"/>
    <property type="molecule type" value="Genomic_DNA"/>
</dbReference>
<dbReference type="EMBL" id="AY557830">
    <property type="protein sequence ID" value="AAS56156.1"/>
    <property type="molecule type" value="Genomic_DNA"/>
</dbReference>
<dbReference type="EMBL" id="BK006941">
    <property type="protein sequence ID" value="DAA08105.1"/>
    <property type="molecule type" value="Genomic_DNA"/>
</dbReference>
<dbReference type="PIR" id="B48067">
    <property type="entry name" value="B48067"/>
</dbReference>
<dbReference type="RefSeq" id="NP_011521.1">
    <property type="nucleotide sequence ID" value="NM_001181136.1"/>
</dbReference>
<dbReference type="SMR" id="P33412"/>
<dbReference type="BioGRID" id="33251">
    <property type="interactions" value="71"/>
</dbReference>
<dbReference type="FunCoup" id="P33412">
    <property type="interactions" value="646"/>
</dbReference>
<dbReference type="IntAct" id="P33412">
    <property type="interactions" value="5"/>
</dbReference>
<dbReference type="STRING" id="4932.YGR007W"/>
<dbReference type="SwissLipids" id="SLP:000000067"/>
<dbReference type="iPTMnet" id="P33412"/>
<dbReference type="PaxDb" id="4932-YGR007W"/>
<dbReference type="PeptideAtlas" id="P33412"/>
<dbReference type="EnsemblFungi" id="YGR007W_mRNA">
    <property type="protein sequence ID" value="YGR007W"/>
    <property type="gene ID" value="YGR007W"/>
</dbReference>
<dbReference type="GeneID" id="852890"/>
<dbReference type="KEGG" id="sce:YGR007W"/>
<dbReference type="AGR" id="SGD:S000003239"/>
<dbReference type="SGD" id="S000003239">
    <property type="gene designation" value="ECT1"/>
</dbReference>
<dbReference type="VEuPathDB" id="FungiDB:YGR007W"/>
<dbReference type="eggNOG" id="KOG2803">
    <property type="taxonomic scope" value="Eukaryota"/>
</dbReference>
<dbReference type="GeneTree" id="ENSGT00550000075065"/>
<dbReference type="HOGENOM" id="CLU_031246_1_0_1"/>
<dbReference type="InParanoid" id="P33412"/>
<dbReference type="OMA" id="FESNNWV"/>
<dbReference type="OrthoDB" id="40021at2759"/>
<dbReference type="BioCyc" id="YEAST:YGR007W-MONOMER"/>
<dbReference type="Reactome" id="R-SCE-1483213">
    <property type="pathway name" value="Synthesis of PE"/>
</dbReference>
<dbReference type="UniPathway" id="UPA00558">
    <property type="reaction ID" value="UER00742"/>
</dbReference>
<dbReference type="BioGRID-ORCS" id="852890">
    <property type="hits" value="0 hits in 10 CRISPR screens"/>
</dbReference>
<dbReference type="ChiTaRS" id="ECT1">
    <property type="organism name" value="yeast"/>
</dbReference>
<dbReference type="PRO" id="PR:P33412"/>
<dbReference type="Proteomes" id="UP000002311">
    <property type="component" value="Chromosome VII"/>
</dbReference>
<dbReference type="RNAct" id="P33412">
    <property type="molecule type" value="protein"/>
</dbReference>
<dbReference type="GO" id="GO:0005737">
    <property type="term" value="C:cytoplasm"/>
    <property type="evidence" value="ECO:0007005"/>
    <property type="project" value="SGD"/>
</dbReference>
<dbReference type="GO" id="GO:0005634">
    <property type="term" value="C:nucleus"/>
    <property type="evidence" value="ECO:0007005"/>
    <property type="project" value="SGD"/>
</dbReference>
<dbReference type="GO" id="GO:0004306">
    <property type="term" value="F:ethanolamine-phosphate cytidylyltransferase activity"/>
    <property type="evidence" value="ECO:0000314"/>
    <property type="project" value="SGD"/>
</dbReference>
<dbReference type="GO" id="GO:0006646">
    <property type="term" value="P:phosphatidylethanolamine biosynthetic process"/>
    <property type="evidence" value="ECO:0000315"/>
    <property type="project" value="SGD"/>
</dbReference>
<dbReference type="CDD" id="cd02174">
    <property type="entry name" value="CCT"/>
    <property type="match status" value="1"/>
</dbReference>
<dbReference type="FunFam" id="3.40.50.620:FF:000260">
    <property type="entry name" value="Ethanolamine-phosphate cytidylyltransferase"/>
    <property type="match status" value="1"/>
</dbReference>
<dbReference type="Gene3D" id="3.40.50.620">
    <property type="entry name" value="HUPs"/>
    <property type="match status" value="2"/>
</dbReference>
<dbReference type="InterPro" id="IPR041723">
    <property type="entry name" value="CCT"/>
</dbReference>
<dbReference type="InterPro" id="IPR004821">
    <property type="entry name" value="Cyt_trans-like"/>
</dbReference>
<dbReference type="InterPro" id="IPR044608">
    <property type="entry name" value="Ect1/PCYT2"/>
</dbReference>
<dbReference type="InterPro" id="IPR014729">
    <property type="entry name" value="Rossmann-like_a/b/a_fold"/>
</dbReference>
<dbReference type="NCBIfam" id="TIGR00125">
    <property type="entry name" value="cyt_tran_rel"/>
    <property type="match status" value="1"/>
</dbReference>
<dbReference type="PANTHER" id="PTHR45780">
    <property type="entry name" value="ETHANOLAMINE-PHOSPHATE CYTIDYLYLTRANSFERASE"/>
    <property type="match status" value="1"/>
</dbReference>
<dbReference type="PANTHER" id="PTHR45780:SF2">
    <property type="entry name" value="ETHANOLAMINE-PHOSPHATE CYTIDYLYLTRANSFERASE"/>
    <property type="match status" value="1"/>
</dbReference>
<dbReference type="Pfam" id="PF01467">
    <property type="entry name" value="CTP_transf_like"/>
    <property type="match status" value="2"/>
</dbReference>
<dbReference type="SUPFAM" id="SSF52374">
    <property type="entry name" value="Nucleotidylyl transferase"/>
    <property type="match status" value="2"/>
</dbReference>
<keyword id="KW-0963">Cytoplasm</keyword>
<keyword id="KW-0444">Lipid biosynthesis</keyword>
<keyword id="KW-0443">Lipid metabolism</keyword>
<keyword id="KW-0548">Nucleotidyltransferase</keyword>
<keyword id="KW-0539">Nucleus</keyword>
<keyword id="KW-0594">Phospholipid biosynthesis</keyword>
<keyword id="KW-1208">Phospholipid metabolism</keyword>
<keyword id="KW-1185">Reference proteome</keyword>
<keyword id="KW-0808">Transferase</keyword>
<accession>P33412</accession>
<accession>D6VUE4</accession>
<accession>Q05725</accession>
<organism>
    <name type="scientific">Saccharomyces cerevisiae (strain ATCC 204508 / S288c)</name>
    <name type="common">Baker's yeast</name>
    <dbReference type="NCBI Taxonomy" id="559292"/>
    <lineage>
        <taxon>Eukaryota</taxon>
        <taxon>Fungi</taxon>
        <taxon>Dikarya</taxon>
        <taxon>Ascomycota</taxon>
        <taxon>Saccharomycotina</taxon>
        <taxon>Saccharomycetes</taxon>
        <taxon>Saccharomycetales</taxon>
        <taxon>Saccharomycetaceae</taxon>
        <taxon>Saccharomyces</taxon>
    </lineage>
</organism>
<proteinExistence type="evidence at protein level"/>
<comment type="function">
    <text evidence="4 5 6">Ethanolamine-phosphate cytidylyltransferase which catalyzes the second step of phosphatidylethanolamine biosynthesis. Involved in the maintenance of plasma membrane and required for proper sporulation.</text>
</comment>
<comment type="catalytic activity">
    <reaction evidence="6">
        <text>phosphoethanolamine + CTP + H(+) = CDP-ethanolamine + diphosphate</text>
        <dbReference type="Rhea" id="RHEA:24592"/>
        <dbReference type="ChEBI" id="CHEBI:15378"/>
        <dbReference type="ChEBI" id="CHEBI:33019"/>
        <dbReference type="ChEBI" id="CHEBI:37563"/>
        <dbReference type="ChEBI" id="CHEBI:57876"/>
        <dbReference type="ChEBI" id="CHEBI:58190"/>
        <dbReference type="EC" id="2.7.7.14"/>
    </reaction>
</comment>
<comment type="pathway">
    <text>Phospholipid metabolism; phosphatidylethanolamine biosynthesis; phosphatidylethanolamine from ethanolamine: step 2/3.</text>
</comment>
<comment type="subcellular location">
    <subcellularLocation>
        <location evidence="2">Cytoplasm</location>
    </subcellularLocation>
    <subcellularLocation>
        <location evidence="2">Nucleus</location>
    </subcellularLocation>
</comment>
<comment type="induction">
    <text evidence="1">By isooctane.</text>
</comment>
<comment type="miscellaneous">
    <text evidence="3">Present with 4700 molecules/cell in log phase SD medium.</text>
</comment>
<comment type="similarity">
    <text evidence="8">Belongs to the cytidylyltransferase family.</text>
</comment>